<accession>Q69R21</accession>
<name>ALDO4_ORYSJ</name>
<sequence length="837" mass="91370">MTKVVAPVERVVFELNGERQEVAAADVEPSTTLLEFIRTRTPFRGPKLGCGEGGCGACVILIAKYNPKTDEVTEFNVNSCLTLLYSIHFCSIITTEGLGNTKDGFHSIQKRMSGFHASQCGFCTPGMCMSIFSSLVNADKSKKPAPPKGFSKLSISEAERSFSGNMCRCTGYRPIVDACKSFESDVDLEDLGLNIFWKKGDKHPDPTKLPSYTLGGGICTFPDFLKSEIKSSLDFNDASISGPREGWYCPKSIKQYYKLVNSGLFSESSVKVVVGNTSTGVYKDQDLYDKYIDIAGIPELSAIVRKDKGIEIGAATSISRTIEILNQESELTSSPNGSVVFRKLAEHMSKVASPFVRNTASIGGNIILAHKYPFRSDIATILLGAAATVNLQVSSKTLHVNLEQFLEQPPLDHSTLLLSIFIPHWASDCKKEHTLVFETYRAAPRPLGNAVSYVNSAFLGHVSLDKSSGDNILSNLHLAFGAYGTKHAIRARKVEEYLTGKILSASVVLEAIRLLRETIVPVEGTTHPEYRVSVAVGFLFSFLSPLCKGVIESGKTLSISEDLVDTDNVHNKPLSSRRETLSDDEYTPVGDPIKKYKVEVQASGEAIYVDDIPAPKNCLYGEFIYSTQPLANVKSIKFKPSLASKKIITVVSAKDIPTGGRNIGSTFWFGDEEPLFGDPIAEFAGQVLGVVIAETQPYADMAAKQAVVEYTTDGLKAPILTVEQAVQSNSYFQVPPERAPKQVGDFSNGMAEADHKIMSEEVKLSSQYYFYMETQTALAIPDEDNTMTVYSSSQFSELAQNVISKCLGIPFNNVRVITRRAGGGFGGKVVRSLHVRI</sequence>
<comment type="catalytic activity">
    <reaction>
        <text>an aldehyde + O2 + H2O = a carboxylate + H2O2 + H(+)</text>
        <dbReference type="Rhea" id="RHEA:16829"/>
        <dbReference type="ChEBI" id="CHEBI:15377"/>
        <dbReference type="ChEBI" id="CHEBI:15378"/>
        <dbReference type="ChEBI" id="CHEBI:15379"/>
        <dbReference type="ChEBI" id="CHEBI:16240"/>
        <dbReference type="ChEBI" id="CHEBI:17478"/>
        <dbReference type="ChEBI" id="CHEBI:29067"/>
        <dbReference type="EC" id="1.2.3.1"/>
    </reaction>
</comment>
<comment type="cofactor">
    <cofactor evidence="1">
        <name>[2Fe-2S] cluster</name>
        <dbReference type="ChEBI" id="CHEBI:190135"/>
    </cofactor>
    <text evidence="1">Binds 2 [2Fe-2S] clusters.</text>
</comment>
<comment type="cofactor">
    <cofactor evidence="1">
        <name>FAD</name>
        <dbReference type="ChEBI" id="CHEBI:57692"/>
    </cofactor>
</comment>
<comment type="cofactor">
    <cofactor evidence="1">
        <name>Mo-molybdopterin</name>
        <dbReference type="ChEBI" id="CHEBI:71302"/>
    </cofactor>
    <text evidence="1">Binds 1 Mo-molybdopterin (Mo-MPT) cofactor per subunit.</text>
</comment>
<comment type="subunit">
    <text evidence="1">Aldehyde oxidases (AO) are homodimers and heterodimers of AO subunits.</text>
</comment>
<comment type="similarity">
    <text evidence="4">Belongs to the xanthine dehydrogenase family.</text>
</comment>
<evidence type="ECO:0000250" key="1"/>
<evidence type="ECO:0000255" key="2">
    <source>
        <dbReference type="PROSITE-ProRule" id="PRU00465"/>
    </source>
</evidence>
<evidence type="ECO:0000255" key="3">
    <source>
        <dbReference type="PROSITE-ProRule" id="PRU00718"/>
    </source>
</evidence>
<evidence type="ECO:0000305" key="4"/>
<keyword id="KW-0001">2Fe-2S</keyword>
<keyword id="KW-0937">Abscisic acid biosynthesis</keyword>
<keyword id="KW-0073">Auxin biosynthesis</keyword>
<keyword id="KW-0274">FAD</keyword>
<keyword id="KW-0285">Flavoprotein</keyword>
<keyword id="KW-0408">Iron</keyword>
<keyword id="KW-0411">Iron-sulfur</keyword>
<keyword id="KW-0479">Metal-binding</keyword>
<keyword id="KW-0500">Molybdenum</keyword>
<keyword id="KW-0520">NAD</keyword>
<keyword id="KW-0560">Oxidoreductase</keyword>
<keyword id="KW-1185">Reference proteome</keyword>
<reference key="1">
    <citation type="journal article" date="2005" name="Nature">
        <title>The map-based sequence of the rice genome.</title>
        <authorList>
            <consortium name="International rice genome sequencing project (IRGSP)"/>
        </authorList>
    </citation>
    <scope>NUCLEOTIDE SEQUENCE [LARGE SCALE GENOMIC DNA]</scope>
    <source>
        <strain>cv. Nipponbare</strain>
    </source>
</reference>
<reference key="2">
    <citation type="journal article" date="2013" name="Rice">
        <title>Improvement of the Oryza sativa Nipponbare reference genome using next generation sequence and optical map data.</title>
        <authorList>
            <person name="Kawahara Y."/>
            <person name="de la Bastide M."/>
            <person name="Hamilton J.P."/>
            <person name="Kanamori H."/>
            <person name="McCombie W.R."/>
            <person name="Ouyang S."/>
            <person name="Schwartz D.C."/>
            <person name="Tanaka T."/>
            <person name="Wu J."/>
            <person name="Zhou S."/>
            <person name="Childs K.L."/>
            <person name="Davidson R.M."/>
            <person name="Lin H."/>
            <person name="Quesada-Ocampo L."/>
            <person name="Vaillancourt B."/>
            <person name="Sakai H."/>
            <person name="Lee S.S."/>
            <person name="Kim J."/>
            <person name="Numa H."/>
            <person name="Itoh T."/>
            <person name="Buell C.R."/>
            <person name="Matsumoto T."/>
        </authorList>
    </citation>
    <scope>GENOME REANNOTATION</scope>
    <source>
        <strain>cv. Nipponbare</strain>
    </source>
</reference>
<reference key="3">
    <citation type="journal article" date="2003" name="Science">
        <title>Collection, mapping, and annotation of over 28,000 cDNA clones from japonica rice.</title>
        <authorList>
            <consortium name="The rice full-length cDNA consortium"/>
        </authorList>
    </citation>
    <scope>NUCLEOTIDE SEQUENCE [LARGE SCALE MRNA]</scope>
    <source>
        <strain>cv. Nipponbare</strain>
    </source>
</reference>
<gene>
    <name type="ordered locus">Os07g0282300</name>
    <name type="ordered locus">LOC_Os07g18154</name>
    <name type="ORF">P0557D09.36</name>
</gene>
<dbReference type="EC" id="1.2.3.1"/>
<dbReference type="EMBL" id="AP005260">
    <property type="protein sequence ID" value="BAD31252.1"/>
    <property type="molecule type" value="Genomic_DNA"/>
</dbReference>
<dbReference type="EMBL" id="AP014963">
    <property type="status" value="NOT_ANNOTATED_CDS"/>
    <property type="molecule type" value="Genomic_DNA"/>
</dbReference>
<dbReference type="EMBL" id="AK072847">
    <property type="status" value="NOT_ANNOTATED_CDS"/>
    <property type="molecule type" value="mRNA"/>
</dbReference>
<dbReference type="SMR" id="Q69R21"/>
<dbReference type="STRING" id="39947.Q69R21"/>
<dbReference type="PaxDb" id="39947-Q69R21"/>
<dbReference type="eggNOG" id="KOG0430">
    <property type="taxonomic scope" value="Eukaryota"/>
</dbReference>
<dbReference type="InParanoid" id="Q69R21"/>
<dbReference type="Proteomes" id="UP000000763">
    <property type="component" value="Chromosome 7"/>
</dbReference>
<dbReference type="Proteomes" id="UP000059680">
    <property type="component" value="Chromosome 7"/>
</dbReference>
<dbReference type="GO" id="GO:0051537">
    <property type="term" value="F:2 iron, 2 sulfur cluster binding"/>
    <property type="evidence" value="ECO:0007669"/>
    <property type="project" value="UniProtKB-KW"/>
</dbReference>
<dbReference type="GO" id="GO:0004031">
    <property type="term" value="F:aldehyde oxidase activity"/>
    <property type="evidence" value="ECO:0007669"/>
    <property type="project" value="UniProtKB-EC"/>
</dbReference>
<dbReference type="GO" id="GO:0071949">
    <property type="term" value="F:FAD binding"/>
    <property type="evidence" value="ECO:0007669"/>
    <property type="project" value="InterPro"/>
</dbReference>
<dbReference type="GO" id="GO:0005506">
    <property type="term" value="F:iron ion binding"/>
    <property type="evidence" value="ECO:0007669"/>
    <property type="project" value="InterPro"/>
</dbReference>
<dbReference type="GO" id="GO:0016491">
    <property type="term" value="F:oxidoreductase activity"/>
    <property type="evidence" value="ECO:0000318"/>
    <property type="project" value="GO_Central"/>
</dbReference>
<dbReference type="GO" id="GO:0009688">
    <property type="term" value="P:abscisic acid biosynthetic process"/>
    <property type="evidence" value="ECO:0007669"/>
    <property type="project" value="UniProtKB-KW"/>
</dbReference>
<dbReference type="GO" id="GO:0009851">
    <property type="term" value="P:auxin biosynthetic process"/>
    <property type="evidence" value="ECO:0007669"/>
    <property type="project" value="UniProtKB-KW"/>
</dbReference>
<dbReference type="FunFam" id="1.10.150.120:FF:000006">
    <property type="entry name" value="Aldehyde oxidase"/>
    <property type="match status" value="1"/>
</dbReference>
<dbReference type="FunFam" id="3.30.390.50:FF:000003">
    <property type="entry name" value="Aldehyde oxidase1"/>
    <property type="match status" value="1"/>
</dbReference>
<dbReference type="FunFam" id="3.30.365.10:FF:000001">
    <property type="entry name" value="Xanthine dehydrogenase oxidase"/>
    <property type="match status" value="1"/>
</dbReference>
<dbReference type="FunFam" id="3.10.20.30:FF:000012">
    <property type="entry name" value="Xanthine dehydrogenase/oxidase"/>
    <property type="match status" value="1"/>
</dbReference>
<dbReference type="Gene3D" id="3.10.20.30">
    <property type="match status" value="1"/>
</dbReference>
<dbReference type="Gene3D" id="3.30.465.10">
    <property type="match status" value="1"/>
</dbReference>
<dbReference type="Gene3D" id="1.10.150.120">
    <property type="entry name" value="[2Fe-2S]-binding domain"/>
    <property type="match status" value="1"/>
</dbReference>
<dbReference type="Gene3D" id="3.90.1170.50">
    <property type="entry name" value="Aldehyde oxidase/xanthine dehydrogenase, a/b hammerhead"/>
    <property type="match status" value="1"/>
</dbReference>
<dbReference type="Gene3D" id="3.30.365.10">
    <property type="entry name" value="Aldehyde oxidase/xanthine dehydrogenase, molybdopterin binding domain"/>
    <property type="match status" value="2"/>
</dbReference>
<dbReference type="Gene3D" id="3.30.390.50">
    <property type="entry name" value="CO dehydrogenase flavoprotein, C-terminal domain"/>
    <property type="match status" value="1"/>
</dbReference>
<dbReference type="InterPro" id="IPR002888">
    <property type="entry name" value="2Fe-2S-bd"/>
</dbReference>
<dbReference type="InterPro" id="IPR036884">
    <property type="entry name" value="2Fe-2S-bd_dom_sf"/>
</dbReference>
<dbReference type="InterPro" id="IPR036010">
    <property type="entry name" value="2Fe-2S_ferredoxin-like_sf"/>
</dbReference>
<dbReference type="InterPro" id="IPR001041">
    <property type="entry name" value="2Fe-2S_ferredoxin-type"/>
</dbReference>
<dbReference type="InterPro" id="IPR006058">
    <property type="entry name" value="2Fe2S_fd_BS"/>
</dbReference>
<dbReference type="InterPro" id="IPR000674">
    <property type="entry name" value="Ald_Oxase/Xan_DH_a/b"/>
</dbReference>
<dbReference type="InterPro" id="IPR036856">
    <property type="entry name" value="Ald_Oxase/Xan_DH_a/b_sf"/>
</dbReference>
<dbReference type="InterPro" id="IPR016208">
    <property type="entry name" value="Ald_Oxase/xanthine_DH-like"/>
</dbReference>
<dbReference type="InterPro" id="IPR008274">
    <property type="entry name" value="AldOxase/xan_DH_MoCoBD1"/>
</dbReference>
<dbReference type="InterPro" id="IPR037165">
    <property type="entry name" value="AldOxase/xan_DH_Mopterin-bd_sf"/>
</dbReference>
<dbReference type="InterPro" id="IPR012675">
    <property type="entry name" value="Beta-grasp_dom_sf"/>
</dbReference>
<dbReference type="InterPro" id="IPR005107">
    <property type="entry name" value="CO_DH_flav_C"/>
</dbReference>
<dbReference type="InterPro" id="IPR036683">
    <property type="entry name" value="CO_DH_flav_C_dom_sf"/>
</dbReference>
<dbReference type="InterPro" id="IPR016166">
    <property type="entry name" value="FAD-bd_PCMH"/>
</dbReference>
<dbReference type="InterPro" id="IPR036318">
    <property type="entry name" value="FAD-bd_PCMH-like_sf"/>
</dbReference>
<dbReference type="InterPro" id="IPR016169">
    <property type="entry name" value="FAD-bd_PCMH_sub2"/>
</dbReference>
<dbReference type="InterPro" id="IPR002346">
    <property type="entry name" value="Mopterin_DH_FAD-bd"/>
</dbReference>
<dbReference type="PANTHER" id="PTHR11908:SF89">
    <property type="entry name" value="ALDEHYDE OXIDASE-LIKE PROTEIN-RELATED"/>
    <property type="match status" value="1"/>
</dbReference>
<dbReference type="PANTHER" id="PTHR11908">
    <property type="entry name" value="XANTHINE DEHYDROGENASE"/>
    <property type="match status" value="1"/>
</dbReference>
<dbReference type="Pfam" id="PF01315">
    <property type="entry name" value="Ald_Xan_dh_C"/>
    <property type="match status" value="1"/>
</dbReference>
<dbReference type="Pfam" id="PF03450">
    <property type="entry name" value="CO_deh_flav_C"/>
    <property type="match status" value="1"/>
</dbReference>
<dbReference type="Pfam" id="PF00941">
    <property type="entry name" value="FAD_binding_5"/>
    <property type="match status" value="1"/>
</dbReference>
<dbReference type="Pfam" id="PF00111">
    <property type="entry name" value="Fer2"/>
    <property type="match status" value="1"/>
</dbReference>
<dbReference type="Pfam" id="PF01799">
    <property type="entry name" value="Fer2_2"/>
    <property type="match status" value="1"/>
</dbReference>
<dbReference type="Pfam" id="PF02738">
    <property type="entry name" value="MoCoBD_1"/>
    <property type="match status" value="1"/>
</dbReference>
<dbReference type="SMART" id="SM01008">
    <property type="entry name" value="Ald_Xan_dh_C"/>
    <property type="match status" value="1"/>
</dbReference>
<dbReference type="SMART" id="SM01092">
    <property type="entry name" value="CO_deh_flav_C"/>
    <property type="match status" value="1"/>
</dbReference>
<dbReference type="SUPFAM" id="SSF54292">
    <property type="entry name" value="2Fe-2S ferredoxin-like"/>
    <property type="match status" value="1"/>
</dbReference>
<dbReference type="SUPFAM" id="SSF55447">
    <property type="entry name" value="CO dehydrogenase flavoprotein C-terminal domain-like"/>
    <property type="match status" value="1"/>
</dbReference>
<dbReference type="SUPFAM" id="SSF47741">
    <property type="entry name" value="CO dehydrogenase ISP C-domain like"/>
    <property type="match status" value="1"/>
</dbReference>
<dbReference type="SUPFAM" id="SSF54665">
    <property type="entry name" value="CO dehydrogenase molybdoprotein N-domain-like"/>
    <property type="match status" value="1"/>
</dbReference>
<dbReference type="SUPFAM" id="SSF56176">
    <property type="entry name" value="FAD-binding/transporter-associated domain-like"/>
    <property type="match status" value="1"/>
</dbReference>
<dbReference type="SUPFAM" id="SSF56003">
    <property type="entry name" value="Molybdenum cofactor-binding domain"/>
    <property type="match status" value="1"/>
</dbReference>
<dbReference type="PROSITE" id="PS00197">
    <property type="entry name" value="2FE2S_FER_1"/>
    <property type="match status" value="1"/>
</dbReference>
<dbReference type="PROSITE" id="PS51085">
    <property type="entry name" value="2FE2S_FER_2"/>
    <property type="match status" value="1"/>
</dbReference>
<dbReference type="PROSITE" id="PS51387">
    <property type="entry name" value="FAD_PCMH"/>
    <property type="match status" value="1"/>
</dbReference>
<proteinExistence type="evidence at transcript level"/>
<organism>
    <name type="scientific">Oryza sativa subsp. japonica</name>
    <name type="common">Rice</name>
    <dbReference type="NCBI Taxonomy" id="39947"/>
    <lineage>
        <taxon>Eukaryota</taxon>
        <taxon>Viridiplantae</taxon>
        <taxon>Streptophyta</taxon>
        <taxon>Embryophyta</taxon>
        <taxon>Tracheophyta</taxon>
        <taxon>Spermatophyta</taxon>
        <taxon>Magnoliopsida</taxon>
        <taxon>Liliopsida</taxon>
        <taxon>Poales</taxon>
        <taxon>Poaceae</taxon>
        <taxon>BOP clade</taxon>
        <taxon>Oryzoideae</taxon>
        <taxon>Oryzeae</taxon>
        <taxon>Oryzinae</taxon>
        <taxon>Oryza</taxon>
        <taxon>Oryza sativa</taxon>
    </lineage>
</organism>
<protein>
    <recommendedName>
        <fullName>Probable aldehyde oxidase 4</fullName>
        <shortName>AO-4</shortName>
        <ecNumber>1.2.3.1</ecNumber>
    </recommendedName>
</protein>
<feature type="chain" id="PRO_0000247649" description="Probable aldehyde oxidase 4">
    <location>
        <begin position="1"/>
        <end position="837"/>
    </location>
</feature>
<feature type="domain" description="2Fe-2S ferredoxin-type" evidence="2">
    <location>
        <begin position="9"/>
        <end position="98"/>
    </location>
</feature>
<feature type="domain" description="FAD-binding PCMH-type" evidence="3">
    <location>
        <begin position="240"/>
        <end position="427"/>
    </location>
</feature>
<feature type="binding site" evidence="2">
    <location>
        <position position="50"/>
    </location>
    <ligand>
        <name>[2Fe-2S] cluster</name>
        <dbReference type="ChEBI" id="CHEBI:190135"/>
    </ligand>
</feature>
<feature type="binding site" evidence="2">
    <location>
        <position position="55"/>
    </location>
    <ligand>
        <name>[2Fe-2S] cluster</name>
        <dbReference type="ChEBI" id="CHEBI:190135"/>
    </ligand>
</feature>
<feature type="binding site" evidence="2">
    <location>
        <position position="58"/>
    </location>
    <ligand>
        <name>[2Fe-2S] cluster</name>
        <dbReference type="ChEBI" id="CHEBI:190135"/>
    </ligand>
</feature>
<feature type="binding site" evidence="2">
    <location>
        <position position="80"/>
    </location>
    <ligand>
        <name>[2Fe-2S] cluster</name>
        <dbReference type="ChEBI" id="CHEBI:190135"/>
    </ligand>
</feature>